<name>GPMI_FLAJ1</name>
<sequence length="505" mass="55874">MNKKVILMILDGWGKSPDPKVSAIDNANVPFINSLYKNYPSAQLRTDGLNVGLPEGQMGNSEVGHMNLGAGRIVYQDLAKINLAVAHKTLAKEQVLIDAFTYAKENNKKVHFLGLVSDGGVHSHTSHLRGLIDASQEYGLDQVYVHAFTDGRDVDPKSGAKYIHDLQDYIKDTPVKIASIVGRYYAMDRDKRWERVKLAYDLVVNGVGTPSTNPVSSVLESYEKDVTDEFIEPVVIVDENAKPLATIVEGDVVIFFNFRTDRGRELTEALSQHDFHEQNMHKLNLYYVTLTNYDETYQNVKVVYNKDNITETLGEVLEKAGKKQIRIAETEKYPHVTFFFSGGREIPFEGESRILRNSPKVATYDLQPEMSAYELADALVPELNKGEVDFVCLNFANGDMVGHTGIMEAAIKACEAVDACAKKVIDAALANDYTTIVIADHGNCETMINPDGSPNTAHTTNPVPIILVDKQLKNIQDGVLGDIAPTILELMGVQQPNAMTCHSLL</sequence>
<evidence type="ECO:0000255" key="1">
    <source>
        <dbReference type="HAMAP-Rule" id="MF_01038"/>
    </source>
</evidence>
<organism>
    <name type="scientific">Flavobacterium johnsoniae (strain ATCC 17061 / DSM 2064 / JCM 8514 / BCRC 14874 / CCUG 350202 / NBRC 14942 / NCIMB 11054 / UW101)</name>
    <name type="common">Cytophaga johnsonae</name>
    <dbReference type="NCBI Taxonomy" id="376686"/>
    <lineage>
        <taxon>Bacteria</taxon>
        <taxon>Pseudomonadati</taxon>
        <taxon>Bacteroidota</taxon>
        <taxon>Flavobacteriia</taxon>
        <taxon>Flavobacteriales</taxon>
        <taxon>Flavobacteriaceae</taxon>
        <taxon>Flavobacterium</taxon>
    </lineage>
</organism>
<dbReference type="EC" id="5.4.2.12" evidence="1"/>
<dbReference type="EMBL" id="CP000685">
    <property type="protein sequence ID" value="ABQ04796.1"/>
    <property type="molecule type" value="Genomic_DNA"/>
</dbReference>
<dbReference type="RefSeq" id="WP_012023840.1">
    <property type="nucleotide sequence ID" value="NC_009441.1"/>
</dbReference>
<dbReference type="SMR" id="A5FJ26"/>
<dbReference type="STRING" id="376686.Fjoh_1764"/>
<dbReference type="KEGG" id="fjo:Fjoh_1764"/>
<dbReference type="eggNOG" id="COG0696">
    <property type="taxonomic scope" value="Bacteria"/>
</dbReference>
<dbReference type="HOGENOM" id="CLU_026099_2_0_10"/>
<dbReference type="OrthoDB" id="9800863at2"/>
<dbReference type="UniPathway" id="UPA00109">
    <property type="reaction ID" value="UER00186"/>
</dbReference>
<dbReference type="Proteomes" id="UP000006694">
    <property type="component" value="Chromosome"/>
</dbReference>
<dbReference type="GO" id="GO:0005829">
    <property type="term" value="C:cytosol"/>
    <property type="evidence" value="ECO:0007669"/>
    <property type="project" value="TreeGrafter"/>
</dbReference>
<dbReference type="GO" id="GO:0030145">
    <property type="term" value="F:manganese ion binding"/>
    <property type="evidence" value="ECO:0007669"/>
    <property type="project" value="UniProtKB-UniRule"/>
</dbReference>
<dbReference type="GO" id="GO:0004619">
    <property type="term" value="F:phosphoglycerate mutase activity"/>
    <property type="evidence" value="ECO:0007669"/>
    <property type="project" value="UniProtKB-EC"/>
</dbReference>
<dbReference type="GO" id="GO:0006007">
    <property type="term" value="P:glucose catabolic process"/>
    <property type="evidence" value="ECO:0007669"/>
    <property type="project" value="InterPro"/>
</dbReference>
<dbReference type="GO" id="GO:0006096">
    <property type="term" value="P:glycolytic process"/>
    <property type="evidence" value="ECO:0007669"/>
    <property type="project" value="UniProtKB-UniRule"/>
</dbReference>
<dbReference type="CDD" id="cd16010">
    <property type="entry name" value="iPGM"/>
    <property type="match status" value="1"/>
</dbReference>
<dbReference type="FunFam" id="3.40.1450.10:FF:000002">
    <property type="entry name" value="2,3-bisphosphoglycerate-independent phosphoglycerate mutase"/>
    <property type="match status" value="1"/>
</dbReference>
<dbReference type="Gene3D" id="3.40.720.10">
    <property type="entry name" value="Alkaline Phosphatase, subunit A"/>
    <property type="match status" value="1"/>
</dbReference>
<dbReference type="Gene3D" id="3.40.1450.10">
    <property type="entry name" value="BPG-independent phosphoglycerate mutase, domain B"/>
    <property type="match status" value="1"/>
</dbReference>
<dbReference type="HAMAP" id="MF_01038">
    <property type="entry name" value="GpmI"/>
    <property type="match status" value="1"/>
</dbReference>
<dbReference type="InterPro" id="IPR017850">
    <property type="entry name" value="Alkaline_phosphatase_core_sf"/>
</dbReference>
<dbReference type="InterPro" id="IPR011258">
    <property type="entry name" value="BPG-indep_PGM_N"/>
</dbReference>
<dbReference type="InterPro" id="IPR006124">
    <property type="entry name" value="Metalloenzyme"/>
</dbReference>
<dbReference type="InterPro" id="IPR036646">
    <property type="entry name" value="PGAM_B_sf"/>
</dbReference>
<dbReference type="InterPro" id="IPR005995">
    <property type="entry name" value="Pgm_bpd_ind"/>
</dbReference>
<dbReference type="NCBIfam" id="TIGR01307">
    <property type="entry name" value="pgm_bpd_ind"/>
    <property type="match status" value="1"/>
</dbReference>
<dbReference type="PANTHER" id="PTHR31637">
    <property type="entry name" value="2,3-BISPHOSPHOGLYCERATE-INDEPENDENT PHOSPHOGLYCERATE MUTASE"/>
    <property type="match status" value="1"/>
</dbReference>
<dbReference type="PANTHER" id="PTHR31637:SF0">
    <property type="entry name" value="2,3-BISPHOSPHOGLYCERATE-INDEPENDENT PHOSPHOGLYCERATE MUTASE"/>
    <property type="match status" value="1"/>
</dbReference>
<dbReference type="Pfam" id="PF06415">
    <property type="entry name" value="iPGM_N"/>
    <property type="match status" value="1"/>
</dbReference>
<dbReference type="Pfam" id="PF01676">
    <property type="entry name" value="Metalloenzyme"/>
    <property type="match status" value="1"/>
</dbReference>
<dbReference type="PIRSF" id="PIRSF001492">
    <property type="entry name" value="IPGAM"/>
    <property type="match status" value="1"/>
</dbReference>
<dbReference type="SUPFAM" id="SSF64158">
    <property type="entry name" value="2,3-Bisphosphoglycerate-independent phosphoglycerate mutase, substrate-binding domain"/>
    <property type="match status" value="1"/>
</dbReference>
<dbReference type="SUPFAM" id="SSF53649">
    <property type="entry name" value="Alkaline phosphatase-like"/>
    <property type="match status" value="1"/>
</dbReference>
<feature type="chain" id="PRO_1000084305" description="2,3-bisphosphoglycerate-independent phosphoglycerate mutase">
    <location>
        <begin position="1"/>
        <end position="505"/>
    </location>
</feature>
<feature type="active site" description="Phosphoserine intermediate" evidence="1">
    <location>
        <position position="61"/>
    </location>
</feature>
<feature type="binding site" evidence="1">
    <location>
        <position position="11"/>
    </location>
    <ligand>
        <name>Mn(2+)</name>
        <dbReference type="ChEBI" id="CHEBI:29035"/>
        <label>2</label>
    </ligand>
</feature>
<feature type="binding site" evidence="1">
    <location>
        <position position="61"/>
    </location>
    <ligand>
        <name>Mn(2+)</name>
        <dbReference type="ChEBI" id="CHEBI:29035"/>
        <label>2</label>
    </ligand>
</feature>
<feature type="binding site" evidence="1">
    <location>
        <position position="122"/>
    </location>
    <ligand>
        <name>substrate</name>
    </ligand>
</feature>
<feature type="binding site" evidence="1">
    <location>
        <begin position="152"/>
        <end position="153"/>
    </location>
    <ligand>
        <name>substrate</name>
    </ligand>
</feature>
<feature type="binding site" evidence="1">
    <location>
        <position position="183"/>
    </location>
    <ligand>
        <name>substrate</name>
    </ligand>
</feature>
<feature type="binding site" evidence="1">
    <location>
        <position position="189"/>
    </location>
    <ligand>
        <name>substrate</name>
    </ligand>
</feature>
<feature type="binding site" evidence="1">
    <location>
        <begin position="259"/>
        <end position="262"/>
    </location>
    <ligand>
        <name>substrate</name>
    </ligand>
</feature>
<feature type="binding site" evidence="1">
    <location>
        <position position="332"/>
    </location>
    <ligand>
        <name>substrate</name>
    </ligand>
</feature>
<feature type="binding site" evidence="1">
    <location>
        <position position="399"/>
    </location>
    <ligand>
        <name>Mn(2+)</name>
        <dbReference type="ChEBI" id="CHEBI:29035"/>
        <label>1</label>
    </ligand>
</feature>
<feature type="binding site" evidence="1">
    <location>
        <position position="403"/>
    </location>
    <ligand>
        <name>Mn(2+)</name>
        <dbReference type="ChEBI" id="CHEBI:29035"/>
        <label>1</label>
    </ligand>
</feature>
<feature type="binding site" evidence="1">
    <location>
        <position position="440"/>
    </location>
    <ligand>
        <name>Mn(2+)</name>
        <dbReference type="ChEBI" id="CHEBI:29035"/>
        <label>2</label>
    </ligand>
</feature>
<feature type="binding site" evidence="1">
    <location>
        <position position="441"/>
    </location>
    <ligand>
        <name>Mn(2+)</name>
        <dbReference type="ChEBI" id="CHEBI:29035"/>
        <label>2</label>
    </ligand>
</feature>
<feature type="binding site" evidence="1">
    <location>
        <position position="458"/>
    </location>
    <ligand>
        <name>Mn(2+)</name>
        <dbReference type="ChEBI" id="CHEBI:29035"/>
        <label>1</label>
    </ligand>
</feature>
<proteinExistence type="inferred from homology"/>
<accession>A5FJ26</accession>
<comment type="function">
    <text evidence="1">Catalyzes the interconversion of 2-phosphoglycerate and 3-phosphoglycerate.</text>
</comment>
<comment type="catalytic activity">
    <reaction evidence="1">
        <text>(2R)-2-phosphoglycerate = (2R)-3-phosphoglycerate</text>
        <dbReference type="Rhea" id="RHEA:15901"/>
        <dbReference type="ChEBI" id="CHEBI:58272"/>
        <dbReference type="ChEBI" id="CHEBI:58289"/>
        <dbReference type="EC" id="5.4.2.12"/>
    </reaction>
</comment>
<comment type="cofactor">
    <cofactor evidence="1">
        <name>Mn(2+)</name>
        <dbReference type="ChEBI" id="CHEBI:29035"/>
    </cofactor>
    <text evidence="1">Binds 2 manganese ions per subunit.</text>
</comment>
<comment type="pathway">
    <text evidence="1">Carbohydrate degradation; glycolysis; pyruvate from D-glyceraldehyde 3-phosphate: step 3/5.</text>
</comment>
<comment type="subunit">
    <text evidence="1">Monomer.</text>
</comment>
<comment type="similarity">
    <text evidence="1">Belongs to the BPG-independent phosphoglycerate mutase family.</text>
</comment>
<protein>
    <recommendedName>
        <fullName evidence="1">2,3-bisphosphoglycerate-independent phosphoglycerate mutase</fullName>
        <shortName evidence="1">BPG-independent PGAM</shortName>
        <shortName evidence="1">Phosphoglyceromutase</shortName>
        <shortName evidence="1">iPGM</shortName>
        <ecNumber evidence="1">5.4.2.12</ecNumber>
    </recommendedName>
</protein>
<reference key="1">
    <citation type="journal article" date="2009" name="Appl. Environ. Microbiol.">
        <title>Novel features of the polysaccharide-digesting gliding bacterium Flavobacterium johnsoniae as revealed by genome sequence analysis.</title>
        <authorList>
            <person name="McBride M.J."/>
            <person name="Xie G."/>
            <person name="Martens E.C."/>
            <person name="Lapidus A."/>
            <person name="Henrissat B."/>
            <person name="Rhodes R.G."/>
            <person name="Goltsman E."/>
            <person name="Wang W."/>
            <person name="Xu J."/>
            <person name="Hunnicutt D.W."/>
            <person name="Staroscik A.M."/>
            <person name="Hoover T.R."/>
            <person name="Cheng Y.Q."/>
            <person name="Stein J.L."/>
        </authorList>
    </citation>
    <scope>NUCLEOTIDE SEQUENCE [LARGE SCALE GENOMIC DNA]</scope>
    <source>
        <strain>ATCC 17061 / DSM 2064 / JCM 8514 / BCRC 14874 / CCUG 350202 / NBRC 14942 / NCIMB 11054 / UW101</strain>
    </source>
</reference>
<keyword id="KW-0324">Glycolysis</keyword>
<keyword id="KW-0413">Isomerase</keyword>
<keyword id="KW-0464">Manganese</keyword>
<keyword id="KW-0479">Metal-binding</keyword>
<gene>
    <name evidence="1" type="primary">gpmI</name>
    <name type="ordered locus">Fjoh_1764</name>
</gene>